<proteinExistence type="evidence at protein level"/>
<accession>Q8TAD7</accession>
<keyword id="KW-1267">Proteomics identification</keyword>
<keyword id="KW-1185">Reference proteome</keyword>
<comment type="tissue specificity">
    <text evidence="2 3">High expression in placenta, skeletal muscle, kidney and pancreas tissues. Absent or very faint expression in heart, brain, lung and liver. Expressed during adipogenic differentiation of mesenchymal stem cells (at protein level).</text>
</comment>
<comment type="similarity">
    <text evidence="4">Belongs to the OCC1 family.</text>
</comment>
<comment type="caution">
    <text evidence="5 6">Was reported to be transcribed but not translated (PubMed:11890990). However, it was later shown that it is expressed at protein level (PubMed:19531736).</text>
</comment>
<comment type="sequence caution" evidence="4">
    <conflict type="erroneous translation">
        <sequence resource="EMBL-CDS" id="AAH13920"/>
    </conflict>
    <text>Wrong choice of CDS.</text>
</comment>
<comment type="sequence caution" evidence="4">
    <conflict type="erroneous translation">
        <sequence resource="EMBL-CDS" id="AAH45812"/>
    </conflict>
    <text>Wrong choice of CDS.</text>
</comment>
<comment type="sequence caution" evidence="4">
    <conflict type="erroneous translation">
        <sequence resource="EMBL-CDS" id="AAH61920"/>
    </conflict>
    <text>Wrong choice of CDS.</text>
</comment>
<comment type="sequence caution" evidence="4">
    <conflict type="erroneous translation">
        <sequence resource="EMBL-CDS" id="AAH67897"/>
    </conflict>
    <text>Wrong choice of CDS.</text>
</comment>
<comment type="sequence caution" evidence="4">
    <conflict type="erroneous translation">
        <sequence resource="EMBL-CDS" id="CAC85391"/>
    </conflict>
    <text>Wrong choice of CDS.</text>
</comment>
<comment type="sequence caution" evidence="4">
    <conflict type="erroneous translation">
        <sequence resource="EMBL-CDS" id="CAC85392"/>
    </conflict>
    <text>Wrong choice of CDS.</text>
</comment>
<evidence type="ECO:0000256" key="1">
    <source>
        <dbReference type="SAM" id="MobiDB-lite"/>
    </source>
</evidence>
<evidence type="ECO:0000269" key="2">
    <source>
    </source>
</evidence>
<evidence type="ECO:0000269" key="3">
    <source>
    </source>
</evidence>
<evidence type="ECO:0000305" key="4"/>
<evidence type="ECO:0000305" key="5">
    <source>
    </source>
</evidence>
<evidence type="ECO:0000305" key="6">
    <source>
    </source>
</evidence>
<name>OCC1_HUMAN</name>
<gene>
    <name type="primary">OCC1</name>
    <name type="synonym">C12orf75</name>
</gene>
<reference key="1">
    <citation type="journal article" date="2002" name="Cancer Genet. Cytogenet.">
        <title>Cloning of the mRNA of overexpression in colon carcinoma-1: a sequence overexpressed in a subset of colon carcinomas.</title>
        <authorList>
            <person name="Pibouin L."/>
            <person name="Villaudy J."/>
            <person name="Ferbus D."/>
            <person name="Muleris M."/>
            <person name="Prosperi M.T."/>
            <person name="Remvikos Y."/>
            <person name="Goubin G."/>
        </authorList>
    </citation>
    <scope>NUCLEOTIDE SEQUENCE [MRNA]</scope>
    <scope>TISSUE SPECIFICITY</scope>
    <source>
        <tissue>Kidney</tissue>
    </source>
</reference>
<reference key="2">
    <citation type="journal article" date="2004" name="Nat. Genet.">
        <title>Complete sequencing and characterization of 21,243 full-length human cDNAs.</title>
        <authorList>
            <person name="Ota T."/>
            <person name="Suzuki Y."/>
            <person name="Nishikawa T."/>
            <person name="Otsuki T."/>
            <person name="Sugiyama T."/>
            <person name="Irie R."/>
            <person name="Wakamatsu A."/>
            <person name="Hayashi K."/>
            <person name="Sato H."/>
            <person name="Nagai K."/>
            <person name="Kimura K."/>
            <person name="Makita H."/>
            <person name="Sekine M."/>
            <person name="Obayashi M."/>
            <person name="Nishi T."/>
            <person name="Shibahara T."/>
            <person name="Tanaka T."/>
            <person name="Ishii S."/>
            <person name="Yamamoto J."/>
            <person name="Saito K."/>
            <person name="Kawai Y."/>
            <person name="Isono Y."/>
            <person name="Nakamura Y."/>
            <person name="Nagahari K."/>
            <person name="Murakami K."/>
            <person name="Yasuda T."/>
            <person name="Iwayanagi T."/>
            <person name="Wagatsuma M."/>
            <person name="Shiratori A."/>
            <person name="Sudo H."/>
            <person name="Hosoiri T."/>
            <person name="Kaku Y."/>
            <person name="Kodaira H."/>
            <person name="Kondo H."/>
            <person name="Sugawara M."/>
            <person name="Takahashi M."/>
            <person name="Kanda K."/>
            <person name="Yokoi T."/>
            <person name="Furuya T."/>
            <person name="Kikkawa E."/>
            <person name="Omura Y."/>
            <person name="Abe K."/>
            <person name="Kamihara K."/>
            <person name="Katsuta N."/>
            <person name="Sato K."/>
            <person name="Tanikawa M."/>
            <person name="Yamazaki M."/>
            <person name="Ninomiya K."/>
            <person name="Ishibashi T."/>
            <person name="Yamashita H."/>
            <person name="Murakawa K."/>
            <person name="Fujimori K."/>
            <person name="Tanai H."/>
            <person name="Kimata M."/>
            <person name="Watanabe M."/>
            <person name="Hiraoka S."/>
            <person name="Chiba Y."/>
            <person name="Ishida S."/>
            <person name="Ono Y."/>
            <person name="Takiguchi S."/>
            <person name="Watanabe S."/>
            <person name="Yosida M."/>
            <person name="Hotuta T."/>
            <person name="Kusano J."/>
            <person name="Kanehori K."/>
            <person name="Takahashi-Fujii A."/>
            <person name="Hara H."/>
            <person name="Tanase T.-O."/>
            <person name="Nomura Y."/>
            <person name="Togiya S."/>
            <person name="Komai F."/>
            <person name="Hara R."/>
            <person name="Takeuchi K."/>
            <person name="Arita M."/>
            <person name="Imose N."/>
            <person name="Musashino K."/>
            <person name="Yuuki H."/>
            <person name="Oshima A."/>
            <person name="Sasaki N."/>
            <person name="Aotsuka S."/>
            <person name="Yoshikawa Y."/>
            <person name="Matsunawa H."/>
            <person name="Ichihara T."/>
            <person name="Shiohata N."/>
            <person name="Sano S."/>
            <person name="Moriya S."/>
            <person name="Momiyama H."/>
            <person name="Satoh N."/>
            <person name="Takami S."/>
            <person name="Terashima Y."/>
            <person name="Suzuki O."/>
            <person name="Nakagawa S."/>
            <person name="Senoh A."/>
            <person name="Mizoguchi H."/>
            <person name="Goto Y."/>
            <person name="Shimizu F."/>
            <person name="Wakebe H."/>
            <person name="Hishigaki H."/>
            <person name="Watanabe T."/>
            <person name="Sugiyama A."/>
            <person name="Takemoto M."/>
            <person name="Kawakami B."/>
            <person name="Yamazaki M."/>
            <person name="Watanabe K."/>
            <person name="Kumagai A."/>
            <person name="Itakura S."/>
            <person name="Fukuzumi Y."/>
            <person name="Fujimori Y."/>
            <person name="Komiyama M."/>
            <person name="Tashiro H."/>
            <person name="Tanigami A."/>
            <person name="Fujiwara T."/>
            <person name="Ono T."/>
            <person name="Yamada K."/>
            <person name="Fujii Y."/>
            <person name="Ozaki K."/>
            <person name="Hirao M."/>
            <person name="Ohmori Y."/>
            <person name="Kawabata A."/>
            <person name="Hikiji T."/>
            <person name="Kobatake N."/>
            <person name="Inagaki H."/>
            <person name="Ikema Y."/>
            <person name="Okamoto S."/>
            <person name="Okitani R."/>
            <person name="Kawakami T."/>
            <person name="Noguchi S."/>
            <person name="Itoh T."/>
            <person name="Shigeta K."/>
            <person name="Senba T."/>
            <person name="Matsumura K."/>
            <person name="Nakajima Y."/>
            <person name="Mizuno T."/>
            <person name="Morinaga M."/>
            <person name="Sasaki M."/>
            <person name="Togashi T."/>
            <person name="Oyama M."/>
            <person name="Hata H."/>
            <person name="Watanabe M."/>
            <person name="Komatsu T."/>
            <person name="Mizushima-Sugano J."/>
            <person name="Satoh T."/>
            <person name="Shirai Y."/>
            <person name="Takahashi Y."/>
            <person name="Nakagawa K."/>
            <person name="Okumura K."/>
            <person name="Nagase T."/>
            <person name="Nomura N."/>
            <person name="Kikuchi H."/>
            <person name="Masuho Y."/>
            <person name="Yamashita R."/>
            <person name="Nakai K."/>
            <person name="Yada T."/>
            <person name="Nakamura Y."/>
            <person name="Ohara O."/>
            <person name="Isogai T."/>
            <person name="Sugano S."/>
        </authorList>
    </citation>
    <scope>NUCLEOTIDE SEQUENCE [LARGE SCALE MRNA]</scope>
</reference>
<reference key="3">
    <citation type="journal article" date="2006" name="Nature">
        <title>The finished DNA sequence of human chromosome 12.</title>
        <authorList>
            <person name="Scherer S.E."/>
            <person name="Muzny D.M."/>
            <person name="Buhay C.J."/>
            <person name="Chen R."/>
            <person name="Cree A."/>
            <person name="Ding Y."/>
            <person name="Dugan-Rocha S."/>
            <person name="Gill R."/>
            <person name="Gunaratne P."/>
            <person name="Harris R.A."/>
            <person name="Hawes A.C."/>
            <person name="Hernandez J."/>
            <person name="Hodgson A.V."/>
            <person name="Hume J."/>
            <person name="Jackson A."/>
            <person name="Khan Z.M."/>
            <person name="Kovar-Smith C."/>
            <person name="Lewis L.R."/>
            <person name="Lozado R.J."/>
            <person name="Metzker M.L."/>
            <person name="Milosavljevic A."/>
            <person name="Miner G.R."/>
            <person name="Montgomery K.T."/>
            <person name="Morgan M.B."/>
            <person name="Nazareth L.V."/>
            <person name="Scott G."/>
            <person name="Sodergren E."/>
            <person name="Song X.-Z."/>
            <person name="Steffen D."/>
            <person name="Lovering R.C."/>
            <person name="Wheeler D.A."/>
            <person name="Worley K.C."/>
            <person name="Yuan Y."/>
            <person name="Zhang Z."/>
            <person name="Adams C.Q."/>
            <person name="Ansari-Lari M.A."/>
            <person name="Ayele M."/>
            <person name="Brown M.J."/>
            <person name="Chen G."/>
            <person name="Chen Z."/>
            <person name="Clerc-Blankenburg K.P."/>
            <person name="Davis C."/>
            <person name="Delgado O."/>
            <person name="Dinh H.H."/>
            <person name="Draper H."/>
            <person name="Gonzalez-Garay M.L."/>
            <person name="Havlak P."/>
            <person name="Jackson L.R."/>
            <person name="Jacob L.S."/>
            <person name="Kelly S.H."/>
            <person name="Li L."/>
            <person name="Li Z."/>
            <person name="Liu J."/>
            <person name="Liu W."/>
            <person name="Lu J."/>
            <person name="Maheshwari M."/>
            <person name="Nguyen B.-V."/>
            <person name="Okwuonu G.O."/>
            <person name="Pasternak S."/>
            <person name="Perez L.M."/>
            <person name="Plopper F.J.H."/>
            <person name="Santibanez J."/>
            <person name="Shen H."/>
            <person name="Tabor P.E."/>
            <person name="Verduzco D."/>
            <person name="Waldron L."/>
            <person name="Wang Q."/>
            <person name="Williams G.A."/>
            <person name="Zhang J."/>
            <person name="Zhou J."/>
            <person name="Allen C.C."/>
            <person name="Amin A.G."/>
            <person name="Anyalebechi V."/>
            <person name="Bailey M."/>
            <person name="Barbaria J.A."/>
            <person name="Bimage K.E."/>
            <person name="Bryant N.P."/>
            <person name="Burch P.E."/>
            <person name="Burkett C.E."/>
            <person name="Burrell K.L."/>
            <person name="Calderon E."/>
            <person name="Cardenas V."/>
            <person name="Carter K."/>
            <person name="Casias K."/>
            <person name="Cavazos I."/>
            <person name="Cavazos S.R."/>
            <person name="Ceasar H."/>
            <person name="Chacko J."/>
            <person name="Chan S.N."/>
            <person name="Chavez D."/>
            <person name="Christopoulos C."/>
            <person name="Chu J."/>
            <person name="Cockrell R."/>
            <person name="Cox C.D."/>
            <person name="Dang M."/>
            <person name="Dathorne S.R."/>
            <person name="David R."/>
            <person name="Davis C.M."/>
            <person name="Davy-Carroll L."/>
            <person name="Deshazo D.R."/>
            <person name="Donlin J.E."/>
            <person name="D'Souza L."/>
            <person name="Eaves K.A."/>
            <person name="Egan A."/>
            <person name="Emery-Cohen A.J."/>
            <person name="Escotto M."/>
            <person name="Flagg N."/>
            <person name="Forbes L.D."/>
            <person name="Gabisi A.M."/>
            <person name="Garza M."/>
            <person name="Hamilton C."/>
            <person name="Henderson N."/>
            <person name="Hernandez O."/>
            <person name="Hines S."/>
            <person name="Hogues M.E."/>
            <person name="Huang M."/>
            <person name="Idlebird D.G."/>
            <person name="Johnson R."/>
            <person name="Jolivet A."/>
            <person name="Jones S."/>
            <person name="Kagan R."/>
            <person name="King L.M."/>
            <person name="Leal B."/>
            <person name="Lebow H."/>
            <person name="Lee S."/>
            <person name="LeVan J.M."/>
            <person name="Lewis L.C."/>
            <person name="London P."/>
            <person name="Lorensuhewa L.M."/>
            <person name="Loulseged H."/>
            <person name="Lovett D.A."/>
            <person name="Lucier A."/>
            <person name="Lucier R.L."/>
            <person name="Ma J."/>
            <person name="Madu R.C."/>
            <person name="Mapua P."/>
            <person name="Martindale A.D."/>
            <person name="Martinez E."/>
            <person name="Massey E."/>
            <person name="Mawhiney S."/>
            <person name="Meador M.G."/>
            <person name="Mendez S."/>
            <person name="Mercado C."/>
            <person name="Mercado I.C."/>
            <person name="Merritt C.E."/>
            <person name="Miner Z.L."/>
            <person name="Minja E."/>
            <person name="Mitchell T."/>
            <person name="Mohabbat F."/>
            <person name="Mohabbat K."/>
            <person name="Montgomery B."/>
            <person name="Moore N."/>
            <person name="Morris S."/>
            <person name="Munidasa M."/>
            <person name="Ngo R.N."/>
            <person name="Nguyen N.B."/>
            <person name="Nickerson E."/>
            <person name="Nwaokelemeh O.O."/>
            <person name="Nwokenkwo S."/>
            <person name="Obregon M."/>
            <person name="Oguh M."/>
            <person name="Oragunye N."/>
            <person name="Oviedo R.J."/>
            <person name="Parish B.J."/>
            <person name="Parker D.N."/>
            <person name="Parrish J."/>
            <person name="Parks K.L."/>
            <person name="Paul H.A."/>
            <person name="Payton B.A."/>
            <person name="Perez A."/>
            <person name="Perrin W."/>
            <person name="Pickens A."/>
            <person name="Primus E.L."/>
            <person name="Pu L.-L."/>
            <person name="Puazo M."/>
            <person name="Quiles M.M."/>
            <person name="Quiroz J.B."/>
            <person name="Rabata D."/>
            <person name="Reeves K."/>
            <person name="Ruiz S.J."/>
            <person name="Shao H."/>
            <person name="Sisson I."/>
            <person name="Sonaike T."/>
            <person name="Sorelle R.P."/>
            <person name="Sutton A.E."/>
            <person name="Svatek A.F."/>
            <person name="Svetz L.A."/>
            <person name="Tamerisa K.S."/>
            <person name="Taylor T.R."/>
            <person name="Teague B."/>
            <person name="Thomas N."/>
            <person name="Thorn R.D."/>
            <person name="Trejos Z.Y."/>
            <person name="Trevino B.K."/>
            <person name="Ukegbu O.N."/>
            <person name="Urban J.B."/>
            <person name="Vasquez L.I."/>
            <person name="Vera V.A."/>
            <person name="Villasana D.M."/>
            <person name="Wang L."/>
            <person name="Ward-Moore S."/>
            <person name="Warren J.T."/>
            <person name="Wei X."/>
            <person name="White F."/>
            <person name="Williamson A.L."/>
            <person name="Wleczyk R."/>
            <person name="Wooden H.S."/>
            <person name="Wooden S.H."/>
            <person name="Yen J."/>
            <person name="Yoon L."/>
            <person name="Yoon V."/>
            <person name="Zorrilla S.E."/>
            <person name="Nelson D."/>
            <person name="Kucherlapati R."/>
            <person name="Weinstock G."/>
            <person name="Gibbs R.A."/>
        </authorList>
    </citation>
    <scope>NUCLEOTIDE SEQUENCE [LARGE SCALE GENOMIC DNA]</scope>
</reference>
<reference key="4">
    <citation type="journal article" date="2004" name="Genome Res.">
        <title>The status, quality, and expansion of the NIH full-length cDNA project: the Mammalian Gene Collection (MGC).</title>
        <authorList>
            <consortium name="The MGC Project Team"/>
        </authorList>
    </citation>
    <scope>NUCLEOTIDE SEQUENCE [LARGE SCALE MRNA]</scope>
    <source>
        <tissue>Bone marrow</tissue>
        <tissue>Liver</tissue>
        <tissue>Testis</tissue>
    </source>
</reference>
<reference key="5">
    <citation type="journal article" date="2009" name="Nucleic Acids Res.">
        <title>Transcripts of unknown function in multiple-signaling pathways involved in human stem cell differentiation.</title>
        <authorList>
            <person name="Kikuchi K."/>
            <person name="Fukuda M."/>
            <person name="Ito T."/>
            <person name="Inoue M."/>
            <person name="Yokoi T."/>
            <person name="Chiku S."/>
            <person name="Mitsuyama T."/>
            <person name="Asai K."/>
            <person name="Hirose T."/>
            <person name="Aizawa Y."/>
        </authorList>
    </citation>
    <scope>TISSUE SPECIFICITY</scope>
</reference>
<organism>
    <name type="scientific">Homo sapiens</name>
    <name type="common">Human</name>
    <dbReference type="NCBI Taxonomy" id="9606"/>
    <lineage>
        <taxon>Eukaryota</taxon>
        <taxon>Metazoa</taxon>
        <taxon>Chordata</taxon>
        <taxon>Craniata</taxon>
        <taxon>Vertebrata</taxon>
        <taxon>Euteleostomi</taxon>
        <taxon>Mammalia</taxon>
        <taxon>Eutheria</taxon>
        <taxon>Euarchontoglires</taxon>
        <taxon>Primates</taxon>
        <taxon>Haplorrhini</taxon>
        <taxon>Catarrhini</taxon>
        <taxon>Hominidae</taxon>
        <taxon>Homo</taxon>
    </lineage>
</organism>
<dbReference type="EMBL" id="AJ311378">
    <property type="protein sequence ID" value="CAC85391.1"/>
    <property type="status" value="ALT_SEQ"/>
    <property type="molecule type" value="mRNA"/>
</dbReference>
<dbReference type="EMBL" id="AJ311377">
    <property type="protein sequence ID" value="CAC85392.1"/>
    <property type="status" value="ALT_SEQ"/>
    <property type="molecule type" value="mRNA"/>
</dbReference>
<dbReference type="EMBL" id="AK056999">
    <property type="status" value="NOT_ANNOTATED_CDS"/>
    <property type="molecule type" value="mRNA"/>
</dbReference>
<dbReference type="EMBL" id="AC011313">
    <property type="status" value="NOT_ANNOTATED_CDS"/>
    <property type="molecule type" value="Genomic_DNA"/>
</dbReference>
<dbReference type="EMBL" id="BC013920">
    <property type="protein sequence ID" value="AAH13920.2"/>
    <property type="status" value="ALT_SEQ"/>
    <property type="molecule type" value="mRNA"/>
</dbReference>
<dbReference type="EMBL" id="BC045812">
    <property type="protein sequence ID" value="AAH45812.1"/>
    <property type="status" value="ALT_SEQ"/>
    <property type="molecule type" value="mRNA"/>
</dbReference>
<dbReference type="EMBL" id="BC061920">
    <property type="protein sequence ID" value="AAH61920.1"/>
    <property type="status" value="ALT_SEQ"/>
    <property type="molecule type" value="mRNA"/>
</dbReference>
<dbReference type="EMBL" id="BC067897">
    <property type="protein sequence ID" value="AAH67897.1"/>
    <property type="status" value="ALT_SEQ"/>
    <property type="molecule type" value="mRNA"/>
</dbReference>
<dbReference type="CCDS" id="CCDS55879.1"/>
<dbReference type="RefSeq" id="NP_001138671.1">
    <property type="nucleotide sequence ID" value="NM_001145199.1"/>
</dbReference>
<dbReference type="BioGRID" id="132482">
    <property type="interactions" value="37"/>
</dbReference>
<dbReference type="FunCoup" id="Q8TAD7">
    <property type="interactions" value="166"/>
</dbReference>
<dbReference type="IntAct" id="Q8TAD7">
    <property type="interactions" value="18"/>
</dbReference>
<dbReference type="STRING" id="9606.ENSP00000448536"/>
<dbReference type="GlyGen" id="Q8TAD7">
    <property type="glycosylation" value="1 site, 1 N-linked glycan (1 site)"/>
</dbReference>
<dbReference type="iPTMnet" id="Q8TAD7"/>
<dbReference type="PhosphoSitePlus" id="Q8TAD7"/>
<dbReference type="SwissPalm" id="Q8TAD7"/>
<dbReference type="BioMuta" id="C12orf75"/>
<dbReference type="jPOST" id="Q8TAD7"/>
<dbReference type="MassIVE" id="Q8TAD7"/>
<dbReference type="PaxDb" id="9606-ENSP00000448536"/>
<dbReference type="PeptideAtlas" id="Q8TAD7"/>
<dbReference type="Pumba" id="Q8TAD7"/>
<dbReference type="TopDownProteomics" id="Q8TAD7"/>
<dbReference type="Antibodypedia" id="54774">
    <property type="antibodies" value="113 antibodies from 23 providers"/>
</dbReference>
<dbReference type="DNASU" id="387882"/>
<dbReference type="Ensembl" id="ENST00000443585.6">
    <property type="protein sequence ID" value="ENSP00000448536.2"/>
    <property type="gene ID" value="ENSG00000235162.9"/>
</dbReference>
<dbReference type="GeneID" id="387882"/>
<dbReference type="KEGG" id="hsa:387882"/>
<dbReference type="MANE-Select" id="ENST00000443585.6">
    <property type="protein sequence ID" value="ENSP00000448536.2"/>
    <property type="RefSeq nucleotide sequence ID" value="NM_001145199.2"/>
    <property type="RefSeq protein sequence ID" value="NP_001138671.1"/>
</dbReference>
<dbReference type="UCSC" id="uc001tlh.4">
    <property type="organism name" value="human"/>
</dbReference>
<dbReference type="AGR" id="HGNC:35164"/>
<dbReference type="CTD" id="387882"/>
<dbReference type="DisGeNET" id="387882"/>
<dbReference type="GeneCards" id="C12orf75"/>
<dbReference type="HGNC" id="HGNC:35164">
    <property type="gene designation" value="C12orf75"/>
</dbReference>
<dbReference type="HPA" id="ENSG00000235162">
    <property type="expression patterns" value="Tissue enhanced (seminal)"/>
</dbReference>
<dbReference type="neXtProt" id="NX_Q8TAD7"/>
<dbReference type="OpenTargets" id="ENSG00000235162"/>
<dbReference type="PharmGKB" id="PA164716815"/>
<dbReference type="VEuPathDB" id="HostDB:ENSG00000235162"/>
<dbReference type="eggNOG" id="ENOG502SSZ4">
    <property type="taxonomic scope" value="Eukaryota"/>
</dbReference>
<dbReference type="GeneTree" id="ENSGT00610000087444"/>
<dbReference type="InParanoid" id="Q8TAD7"/>
<dbReference type="OMA" id="MTQERAC"/>
<dbReference type="OrthoDB" id="8909183at2759"/>
<dbReference type="PAN-GO" id="Q8TAD7">
    <property type="GO annotations" value="0 GO annotations based on evolutionary models"/>
</dbReference>
<dbReference type="PhylomeDB" id="Q8TAD7"/>
<dbReference type="PathwayCommons" id="Q8TAD7"/>
<dbReference type="SignaLink" id="Q8TAD7"/>
<dbReference type="BioGRID-ORCS" id="387882">
    <property type="hits" value="108 hits in 1126 CRISPR screens"/>
</dbReference>
<dbReference type="ChiTaRS" id="C12orf75">
    <property type="organism name" value="human"/>
</dbReference>
<dbReference type="GenomeRNAi" id="387882"/>
<dbReference type="Pharos" id="Q8TAD7">
    <property type="development level" value="Tbio"/>
</dbReference>
<dbReference type="PRO" id="PR:Q8TAD7"/>
<dbReference type="Proteomes" id="UP000005640">
    <property type="component" value="Chromosome 12"/>
</dbReference>
<dbReference type="RNAct" id="Q8TAD7">
    <property type="molecule type" value="protein"/>
</dbReference>
<dbReference type="Bgee" id="ENSG00000235162">
    <property type="expression patterns" value="Expressed in skeletal muscle tissue of rectus abdominis and 170 other cell types or tissues"/>
</dbReference>
<dbReference type="ExpressionAtlas" id="Q8TAD7">
    <property type="expression patterns" value="baseline and differential"/>
</dbReference>
<dbReference type="InterPro" id="IPR029133">
    <property type="entry name" value="OCC1"/>
</dbReference>
<dbReference type="PANTHER" id="PTHR38502">
    <property type="entry name" value="OVEREXPRESSED IN COLON CARCINOMA 1 PROTEIN"/>
    <property type="match status" value="1"/>
</dbReference>
<dbReference type="PANTHER" id="PTHR38502:SF1">
    <property type="entry name" value="OVEREXPRESSED IN COLON CARCINOMA 1 PROTEIN"/>
    <property type="match status" value="1"/>
</dbReference>
<dbReference type="Pfam" id="PF15506">
    <property type="entry name" value="OCC1"/>
    <property type="match status" value="1"/>
</dbReference>
<feature type="chain" id="PRO_0000368221" description="Overexpressed in colon carcinoma 1 protein">
    <location>
        <begin position="1"/>
        <end position="63"/>
    </location>
</feature>
<feature type="region of interest" description="Disordered" evidence="1">
    <location>
        <begin position="1"/>
        <end position="41"/>
    </location>
</feature>
<feature type="compositionally biased region" description="Low complexity" evidence="1">
    <location>
        <begin position="1"/>
        <end position="12"/>
    </location>
</feature>
<sequence length="63" mass="6407">MGCGNSTATSAGAGQGPAGAAKDVTEESVTEDDKRRNYGGVYVGLPSEAVNMVSSQTKTVRKN</sequence>
<protein>
    <recommendedName>
        <fullName>Overexpressed in colon carcinoma 1 protein</fullName>
        <shortName>OCC-1</shortName>
    </recommendedName>
    <alternativeName>
        <fullName>AGD3</fullName>
    </alternativeName>
</protein>